<keyword id="KW-0002">3D-structure</keyword>
<keyword id="KW-0025">Alternative splicing</keyword>
<keyword id="KW-0137">Centromere</keyword>
<keyword id="KW-0158">Chromosome</keyword>
<keyword id="KW-0995">Kinetochore</keyword>
<keyword id="KW-0539">Nucleus</keyword>
<keyword id="KW-0597">Phosphoprotein</keyword>
<keyword id="KW-1267">Proteomics identification</keyword>
<keyword id="KW-1185">Reference proteome</keyword>
<feature type="chain" id="PRO_0000249494" description="Centromere protein N">
    <location>
        <begin position="1"/>
        <end position="339"/>
    </location>
</feature>
<feature type="modified residue" description="Phosphoserine" evidence="15 16 17 18 19 20">
    <location>
        <position position="226"/>
    </location>
</feature>
<feature type="modified residue" description="Phosphoserine" evidence="20">
    <location>
        <position position="235"/>
    </location>
</feature>
<feature type="modified residue" description="Phosphoserine" evidence="16 17 18 19 20">
    <location>
        <position position="282"/>
    </location>
</feature>
<feature type="splice variant" id="VSP_044689" description="In isoform 4." evidence="11">
    <original>YMQFHQHQKVWEVFQMSKGPG</original>
    <variation>C</variation>
    <location>
        <begin position="73"/>
        <end position="93"/>
    </location>
</feature>
<feature type="splice variant" id="VSP_044690" description="In isoform 5." evidence="11">
    <location>
        <begin position="177"/>
        <end position="210"/>
    </location>
</feature>
<feature type="splice variant" id="VSP_020441" description="In isoform 2." evidence="12 13">
    <original>ALTIASKHHQIVKMDLRSRYLDSLKAI</original>
    <variation>ELEATGKIYLRQEEIILDITEMKKACN</variation>
    <location>
        <begin position="178"/>
        <end position="204"/>
    </location>
</feature>
<feature type="splice variant" id="VSP_020442" description="In isoform 2." evidence="12 13">
    <location>
        <begin position="205"/>
        <end position="339"/>
    </location>
</feature>
<feature type="splice variant" id="VSP_044565" description="In isoform 3." evidence="11">
    <original>GIADAPLSPLLTCIPNKRMNYFKIRDK</original>
    <variation>ALVCRIQKLLCYSGSHSQGTQDPSSWQKDLYLLFVPLYPRC</variation>
    <location>
        <begin position="313"/>
        <end position="339"/>
    </location>
</feature>
<feature type="sequence variant" id="VAR_027419" description="In dbSNP:rs935939." evidence="1 2 9 10">
    <original>E</original>
    <variation>D</variation>
    <location>
        <position position="84"/>
    </location>
</feature>
<feature type="sequence variant" id="VAR_048689" description="In dbSNP:rs11641523.">
    <original>Q</original>
    <variation>R</variation>
    <location>
        <position position="223"/>
    </location>
</feature>
<feature type="sequence variant" id="VAR_048690" description="In dbSNP:rs2549887." evidence="1">
    <original>E</original>
    <variation>K</variation>
    <location>
        <position position="288"/>
    </location>
</feature>
<feature type="mutagenesis site" description="Decreases the binding to centromeres." evidence="7">
    <original>R</original>
    <variation>A</variation>
    <location>
        <position position="11"/>
    </location>
</feature>
<feature type="mutagenesis site" description="Decreases the binding to centromeres." evidence="7">
    <original>R</original>
    <variation>A</variation>
    <location>
        <position position="196"/>
    </location>
</feature>
<feature type="sequence conflict" description="In Ref. 2; AK026313." evidence="14" ref="2">
    <original>T</original>
    <variation>A</variation>
    <location>
        <position position="139"/>
    </location>
</feature>
<feature type="helix" evidence="24">
    <location>
        <begin position="3"/>
        <end position="14"/>
    </location>
</feature>
<feature type="helix" evidence="21">
    <location>
        <begin position="18"/>
        <end position="20"/>
    </location>
</feature>
<feature type="helix" evidence="24">
    <location>
        <begin position="21"/>
        <end position="28"/>
    </location>
</feature>
<feature type="helix" evidence="24">
    <location>
        <begin position="33"/>
        <end position="38"/>
    </location>
</feature>
<feature type="strand" evidence="24">
    <location>
        <begin position="41"/>
        <end position="43"/>
    </location>
</feature>
<feature type="helix" evidence="24">
    <location>
        <begin position="45"/>
        <end position="58"/>
    </location>
</feature>
<feature type="helix" evidence="24">
    <location>
        <begin position="63"/>
        <end position="76"/>
    </location>
</feature>
<feature type="helix" evidence="24">
    <location>
        <begin position="78"/>
        <end position="80"/>
    </location>
</feature>
<feature type="strand" evidence="24">
    <location>
        <begin position="83"/>
        <end position="89"/>
    </location>
</feature>
<feature type="helix" evidence="24">
    <location>
        <begin position="101"/>
        <end position="115"/>
    </location>
</feature>
<feature type="strand" evidence="23">
    <location>
        <begin position="116"/>
        <end position="118"/>
    </location>
</feature>
<feature type="strand" evidence="24">
    <location>
        <begin position="120"/>
        <end position="126"/>
    </location>
</feature>
<feature type="turn" evidence="24">
    <location>
        <begin position="127"/>
        <end position="129"/>
    </location>
</feature>
<feature type="strand" evidence="24">
    <location>
        <begin position="130"/>
        <end position="136"/>
    </location>
</feature>
<feature type="strand" evidence="24">
    <location>
        <begin position="140"/>
        <end position="142"/>
    </location>
</feature>
<feature type="strand" evidence="23">
    <location>
        <begin position="146"/>
        <end position="148"/>
    </location>
</feature>
<feature type="strand" evidence="24">
    <location>
        <begin position="150"/>
        <end position="155"/>
    </location>
</feature>
<feature type="strand" evidence="24">
    <location>
        <begin position="158"/>
        <end position="164"/>
    </location>
</feature>
<feature type="helix" evidence="22">
    <location>
        <begin position="168"/>
        <end position="170"/>
    </location>
</feature>
<feature type="helix" evidence="24">
    <location>
        <begin position="172"/>
        <end position="182"/>
    </location>
</feature>
<feature type="strand" evidence="24">
    <location>
        <begin position="186"/>
        <end position="196"/>
    </location>
</feature>
<feature type="helix" evidence="24">
    <location>
        <begin position="198"/>
        <end position="210"/>
    </location>
</feature>
<feature type="strand" evidence="23">
    <location>
        <begin position="237"/>
        <end position="239"/>
    </location>
</feature>
<feature type="helix" evidence="23">
    <location>
        <begin position="242"/>
        <end position="256"/>
    </location>
</feature>
<feature type="strand" evidence="23">
    <location>
        <begin position="264"/>
        <end position="273"/>
    </location>
</feature>
<feature type="strand" evidence="22">
    <location>
        <begin position="284"/>
        <end position="286"/>
    </location>
</feature>
<feature type="strand" evidence="23">
    <location>
        <begin position="291"/>
        <end position="302"/>
    </location>
</feature>
<feature type="turn" evidence="23">
    <location>
        <begin position="303"/>
        <end position="313"/>
    </location>
</feature>
<feature type="turn" evidence="23">
    <location>
        <begin position="321"/>
        <end position="323"/>
    </location>
</feature>
<feature type="helix" evidence="23">
    <location>
        <begin position="326"/>
        <end position="329"/>
    </location>
</feature>
<feature type="strand" evidence="23">
    <location>
        <begin position="332"/>
        <end position="337"/>
    </location>
</feature>
<organism>
    <name type="scientific">Homo sapiens</name>
    <name type="common">Human</name>
    <dbReference type="NCBI Taxonomy" id="9606"/>
    <lineage>
        <taxon>Eukaryota</taxon>
        <taxon>Metazoa</taxon>
        <taxon>Chordata</taxon>
        <taxon>Craniata</taxon>
        <taxon>Vertebrata</taxon>
        <taxon>Euteleostomi</taxon>
        <taxon>Mammalia</taxon>
        <taxon>Eutheria</taxon>
        <taxon>Euarchontoglires</taxon>
        <taxon>Primates</taxon>
        <taxon>Haplorrhini</taxon>
        <taxon>Catarrhini</taxon>
        <taxon>Hominidae</taxon>
        <taxon>Homo</taxon>
    </lineage>
</organism>
<reference key="1">
    <citation type="submission" date="1999-12" db="EMBL/GenBank/DDBJ databases">
        <title>A novel gene expressed in human bone marrow.</title>
        <authorList>
            <person name="Zhao M."/>
            <person name="Gu J."/>
            <person name="Li N."/>
            <person name="Peng Y."/>
            <person name="Han Z."/>
            <person name="Chen Z."/>
        </authorList>
    </citation>
    <scope>NUCLEOTIDE SEQUENCE [LARGE SCALE MRNA] (ISOFORM 2)</scope>
    <scope>VARIANT ASP-84</scope>
    <source>
        <tissue>Bone marrow</tissue>
    </source>
</reference>
<reference key="2">
    <citation type="journal article" date="2004" name="Nat. Genet.">
        <title>Complete sequencing and characterization of 21,243 full-length human cDNAs.</title>
        <authorList>
            <person name="Ota T."/>
            <person name="Suzuki Y."/>
            <person name="Nishikawa T."/>
            <person name="Otsuki T."/>
            <person name="Sugiyama T."/>
            <person name="Irie R."/>
            <person name="Wakamatsu A."/>
            <person name="Hayashi K."/>
            <person name="Sato H."/>
            <person name="Nagai K."/>
            <person name="Kimura K."/>
            <person name="Makita H."/>
            <person name="Sekine M."/>
            <person name="Obayashi M."/>
            <person name="Nishi T."/>
            <person name="Shibahara T."/>
            <person name="Tanaka T."/>
            <person name="Ishii S."/>
            <person name="Yamamoto J."/>
            <person name="Saito K."/>
            <person name="Kawai Y."/>
            <person name="Isono Y."/>
            <person name="Nakamura Y."/>
            <person name="Nagahari K."/>
            <person name="Murakami K."/>
            <person name="Yasuda T."/>
            <person name="Iwayanagi T."/>
            <person name="Wagatsuma M."/>
            <person name="Shiratori A."/>
            <person name="Sudo H."/>
            <person name="Hosoiri T."/>
            <person name="Kaku Y."/>
            <person name="Kodaira H."/>
            <person name="Kondo H."/>
            <person name="Sugawara M."/>
            <person name="Takahashi M."/>
            <person name="Kanda K."/>
            <person name="Yokoi T."/>
            <person name="Furuya T."/>
            <person name="Kikkawa E."/>
            <person name="Omura Y."/>
            <person name="Abe K."/>
            <person name="Kamihara K."/>
            <person name="Katsuta N."/>
            <person name="Sato K."/>
            <person name="Tanikawa M."/>
            <person name="Yamazaki M."/>
            <person name="Ninomiya K."/>
            <person name="Ishibashi T."/>
            <person name="Yamashita H."/>
            <person name="Murakawa K."/>
            <person name="Fujimori K."/>
            <person name="Tanai H."/>
            <person name="Kimata M."/>
            <person name="Watanabe M."/>
            <person name="Hiraoka S."/>
            <person name="Chiba Y."/>
            <person name="Ishida S."/>
            <person name="Ono Y."/>
            <person name="Takiguchi S."/>
            <person name="Watanabe S."/>
            <person name="Yosida M."/>
            <person name="Hotuta T."/>
            <person name="Kusano J."/>
            <person name="Kanehori K."/>
            <person name="Takahashi-Fujii A."/>
            <person name="Hara H."/>
            <person name="Tanase T.-O."/>
            <person name="Nomura Y."/>
            <person name="Togiya S."/>
            <person name="Komai F."/>
            <person name="Hara R."/>
            <person name="Takeuchi K."/>
            <person name="Arita M."/>
            <person name="Imose N."/>
            <person name="Musashino K."/>
            <person name="Yuuki H."/>
            <person name="Oshima A."/>
            <person name="Sasaki N."/>
            <person name="Aotsuka S."/>
            <person name="Yoshikawa Y."/>
            <person name="Matsunawa H."/>
            <person name="Ichihara T."/>
            <person name="Shiohata N."/>
            <person name="Sano S."/>
            <person name="Moriya S."/>
            <person name="Momiyama H."/>
            <person name="Satoh N."/>
            <person name="Takami S."/>
            <person name="Terashima Y."/>
            <person name="Suzuki O."/>
            <person name="Nakagawa S."/>
            <person name="Senoh A."/>
            <person name="Mizoguchi H."/>
            <person name="Goto Y."/>
            <person name="Shimizu F."/>
            <person name="Wakebe H."/>
            <person name="Hishigaki H."/>
            <person name="Watanabe T."/>
            <person name="Sugiyama A."/>
            <person name="Takemoto M."/>
            <person name="Kawakami B."/>
            <person name="Yamazaki M."/>
            <person name="Watanabe K."/>
            <person name="Kumagai A."/>
            <person name="Itakura S."/>
            <person name="Fukuzumi Y."/>
            <person name="Fujimori Y."/>
            <person name="Komiyama M."/>
            <person name="Tashiro H."/>
            <person name="Tanigami A."/>
            <person name="Fujiwara T."/>
            <person name="Ono T."/>
            <person name="Yamada K."/>
            <person name="Fujii Y."/>
            <person name="Ozaki K."/>
            <person name="Hirao M."/>
            <person name="Ohmori Y."/>
            <person name="Kawabata A."/>
            <person name="Hikiji T."/>
            <person name="Kobatake N."/>
            <person name="Inagaki H."/>
            <person name="Ikema Y."/>
            <person name="Okamoto S."/>
            <person name="Okitani R."/>
            <person name="Kawakami T."/>
            <person name="Noguchi S."/>
            <person name="Itoh T."/>
            <person name="Shigeta K."/>
            <person name="Senba T."/>
            <person name="Matsumura K."/>
            <person name="Nakajima Y."/>
            <person name="Mizuno T."/>
            <person name="Morinaga M."/>
            <person name="Sasaki M."/>
            <person name="Togashi T."/>
            <person name="Oyama M."/>
            <person name="Hata H."/>
            <person name="Watanabe M."/>
            <person name="Komatsu T."/>
            <person name="Mizushima-Sugano J."/>
            <person name="Satoh T."/>
            <person name="Shirai Y."/>
            <person name="Takahashi Y."/>
            <person name="Nakagawa K."/>
            <person name="Okumura K."/>
            <person name="Nagase T."/>
            <person name="Nomura N."/>
            <person name="Kikuchi H."/>
            <person name="Masuho Y."/>
            <person name="Yamashita R."/>
            <person name="Nakai K."/>
            <person name="Yada T."/>
            <person name="Nakamura Y."/>
            <person name="Ohara O."/>
            <person name="Isogai T."/>
            <person name="Sugano S."/>
        </authorList>
    </citation>
    <scope>NUCLEOTIDE SEQUENCE [LARGE SCALE MRNA] (ISOFORMS 1; 3; 4 AND 5)</scope>
    <scope>VARIANTS ASP-84 AND LYS-288</scope>
    <source>
        <tissue>Placenta</tissue>
        <tissue>Small intestine</tissue>
        <tissue>Subthalamic nucleus</tissue>
    </source>
</reference>
<reference key="3">
    <citation type="journal article" date="2004" name="Nature">
        <title>The sequence and analysis of duplication-rich human chromosome 16.</title>
        <authorList>
            <person name="Martin J."/>
            <person name="Han C."/>
            <person name="Gordon L.A."/>
            <person name="Terry A."/>
            <person name="Prabhakar S."/>
            <person name="She X."/>
            <person name="Xie G."/>
            <person name="Hellsten U."/>
            <person name="Chan Y.M."/>
            <person name="Altherr M."/>
            <person name="Couronne O."/>
            <person name="Aerts A."/>
            <person name="Bajorek E."/>
            <person name="Black S."/>
            <person name="Blumer H."/>
            <person name="Branscomb E."/>
            <person name="Brown N.C."/>
            <person name="Bruno W.J."/>
            <person name="Buckingham J.M."/>
            <person name="Callen D.F."/>
            <person name="Campbell C.S."/>
            <person name="Campbell M.L."/>
            <person name="Campbell E.W."/>
            <person name="Caoile C."/>
            <person name="Challacombe J.F."/>
            <person name="Chasteen L.A."/>
            <person name="Chertkov O."/>
            <person name="Chi H.C."/>
            <person name="Christensen M."/>
            <person name="Clark L.M."/>
            <person name="Cohn J.D."/>
            <person name="Denys M."/>
            <person name="Detter J.C."/>
            <person name="Dickson M."/>
            <person name="Dimitrijevic-Bussod M."/>
            <person name="Escobar J."/>
            <person name="Fawcett J.J."/>
            <person name="Flowers D."/>
            <person name="Fotopulos D."/>
            <person name="Glavina T."/>
            <person name="Gomez M."/>
            <person name="Gonzales E."/>
            <person name="Goodstein D."/>
            <person name="Goodwin L.A."/>
            <person name="Grady D.L."/>
            <person name="Grigoriev I."/>
            <person name="Groza M."/>
            <person name="Hammon N."/>
            <person name="Hawkins T."/>
            <person name="Haydu L."/>
            <person name="Hildebrand C.E."/>
            <person name="Huang W."/>
            <person name="Israni S."/>
            <person name="Jett J."/>
            <person name="Jewett P.B."/>
            <person name="Kadner K."/>
            <person name="Kimball H."/>
            <person name="Kobayashi A."/>
            <person name="Krawczyk M.-C."/>
            <person name="Leyba T."/>
            <person name="Longmire J.L."/>
            <person name="Lopez F."/>
            <person name="Lou Y."/>
            <person name="Lowry S."/>
            <person name="Ludeman T."/>
            <person name="Manohar C.F."/>
            <person name="Mark G.A."/>
            <person name="McMurray K.L."/>
            <person name="Meincke L.J."/>
            <person name="Morgan J."/>
            <person name="Moyzis R.K."/>
            <person name="Mundt M.O."/>
            <person name="Munk A.C."/>
            <person name="Nandkeshwar R.D."/>
            <person name="Pitluck S."/>
            <person name="Pollard M."/>
            <person name="Predki P."/>
            <person name="Parson-Quintana B."/>
            <person name="Ramirez L."/>
            <person name="Rash S."/>
            <person name="Retterer J."/>
            <person name="Ricke D.O."/>
            <person name="Robinson D.L."/>
            <person name="Rodriguez A."/>
            <person name="Salamov A."/>
            <person name="Saunders E.H."/>
            <person name="Scott D."/>
            <person name="Shough T."/>
            <person name="Stallings R.L."/>
            <person name="Stalvey M."/>
            <person name="Sutherland R.D."/>
            <person name="Tapia R."/>
            <person name="Tesmer J.G."/>
            <person name="Thayer N."/>
            <person name="Thompson L.S."/>
            <person name="Tice H."/>
            <person name="Torney D.C."/>
            <person name="Tran-Gyamfi M."/>
            <person name="Tsai M."/>
            <person name="Ulanovsky L.E."/>
            <person name="Ustaszewska A."/>
            <person name="Vo N."/>
            <person name="White P.S."/>
            <person name="Williams A.L."/>
            <person name="Wills P.L."/>
            <person name="Wu J.-R."/>
            <person name="Wu K."/>
            <person name="Yang J."/>
            <person name="DeJong P."/>
            <person name="Bruce D."/>
            <person name="Doggett N.A."/>
            <person name="Deaven L."/>
            <person name="Schmutz J."/>
            <person name="Grimwood J."/>
            <person name="Richardson P."/>
            <person name="Rokhsar D.S."/>
            <person name="Eichler E.E."/>
            <person name="Gilna P."/>
            <person name="Lucas S.M."/>
            <person name="Myers R.M."/>
            <person name="Rubin E.M."/>
            <person name="Pennacchio L.A."/>
        </authorList>
    </citation>
    <scope>NUCLEOTIDE SEQUENCE [LARGE SCALE GENOMIC DNA]</scope>
</reference>
<reference key="4">
    <citation type="submission" date="2005-09" db="EMBL/GenBank/DDBJ databases">
        <authorList>
            <person name="Mural R.J."/>
            <person name="Istrail S."/>
            <person name="Sutton G.G."/>
            <person name="Florea L."/>
            <person name="Halpern A.L."/>
            <person name="Mobarry C.M."/>
            <person name="Lippert R."/>
            <person name="Walenz B."/>
            <person name="Shatkay H."/>
            <person name="Dew I."/>
            <person name="Miller J.R."/>
            <person name="Flanigan M.J."/>
            <person name="Edwards N.J."/>
            <person name="Bolanos R."/>
            <person name="Fasulo D."/>
            <person name="Halldorsson B.V."/>
            <person name="Hannenhalli S."/>
            <person name="Turner R."/>
            <person name="Yooseph S."/>
            <person name="Lu F."/>
            <person name="Nusskern D.R."/>
            <person name="Shue B.C."/>
            <person name="Zheng X.H."/>
            <person name="Zhong F."/>
            <person name="Delcher A.L."/>
            <person name="Huson D.H."/>
            <person name="Kravitz S.A."/>
            <person name="Mouchard L."/>
            <person name="Reinert K."/>
            <person name="Remington K.A."/>
            <person name="Clark A.G."/>
            <person name="Waterman M.S."/>
            <person name="Eichler E.E."/>
            <person name="Adams M.D."/>
            <person name="Hunkapiller M.W."/>
            <person name="Myers E.W."/>
            <person name="Venter J.C."/>
        </authorList>
    </citation>
    <scope>NUCLEOTIDE SEQUENCE [LARGE SCALE GENOMIC DNA]</scope>
    <scope>VARIANT ASP-84</scope>
</reference>
<reference key="5">
    <citation type="journal article" date="2004" name="Genome Res.">
        <title>The status, quality, and expansion of the NIH full-length cDNA project: the Mammalian Gene Collection (MGC).</title>
        <authorList>
            <consortium name="The MGC Project Team"/>
        </authorList>
    </citation>
    <scope>NUCLEOTIDE SEQUENCE [LARGE SCALE MRNA] (ISOFORMS 1 AND 2)</scope>
    <scope>VARIANT ASP-84</scope>
    <source>
        <tissue>Cervix</tissue>
    </source>
</reference>
<reference key="6">
    <citation type="journal article" date="2006" name="Cell">
        <title>Global, in vivo, and site-specific phosphorylation dynamics in signaling networks.</title>
        <authorList>
            <person name="Olsen J.V."/>
            <person name="Blagoev B."/>
            <person name="Gnad F."/>
            <person name="Macek B."/>
            <person name="Kumar C."/>
            <person name="Mortensen P."/>
            <person name="Mann M."/>
        </authorList>
    </citation>
    <scope>PHOSPHORYLATION [LARGE SCALE ANALYSIS] AT SER-226</scope>
    <scope>IDENTIFICATION BY MASS SPECTROMETRY [LARGE SCALE ANALYSIS]</scope>
    <source>
        <tissue>Cervix carcinoma</tissue>
    </source>
</reference>
<reference key="7">
    <citation type="journal article" date="2006" name="Genes Cells">
        <title>Comprehensive analysis of the ICEN (Interphase Centromere Complex) components enriched in the CENP-A chromatin of human cells.</title>
        <authorList>
            <person name="Izuta H."/>
            <person name="Ikeno M."/>
            <person name="Suzuki N."/>
            <person name="Tomonaga T."/>
            <person name="Nozaki N."/>
            <person name="Obuse C."/>
            <person name="Kisu Y."/>
            <person name="Goshima N."/>
            <person name="Nomura F."/>
            <person name="Nomura N."/>
            <person name="Yoda K."/>
        </authorList>
    </citation>
    <scope>FUNCTION</scope>
    <scope>SUBCELLULAR LOCATION</scope>
</reference>
<reference key="8">
    <citation type="journal article" date="2006" name="Nat. Cell Biol.">
        <title>The CENP-H-I complex is required for the efficient incorporation of newly synthesized CENP-A into centromeres.</title>
        <authorList>
            <person name="Okada M."/>
            <person name="Cheeseman I.M."/>
            <person name="Hori T."/>
            <person name="Okawa K."/>
            <person name="McLeod I.X."/>
            <person name="Yates J.R. III"/>
            <person name="Desai A."/>
            <person name="Fukagawa T."/>
        </authorList>
    </citation>
    <scope>IDENTIFICATION IN A COMPLEX WITH CENPH; CENPI; CENPK; CENPO; CENPP; CENPQ; CENPR AND CENPU</scope>
</reference>
<reference key="9">
    <citation type="journal article" date="2006" name="Nat. Cell Biol.">
        <title>The human CENP-A centromeric nucleosome-associated complex.</title>
        <authorList>
            <person name="Foltz D.R."/>
            <person name="Jansen L.E.T."/>
            <person name="Black B.E."/>
            <person name="Bailey A.O."/>
            <person name="Yates J.R. III"/>
            <person name="Cleveland D.W."/>
        </authorList>
    </citation>
    <scope>IDENTIFICATION IN THE CENPA-NAC COMPLEX WITH CENPA; CENPC; CENPH; CENPM; CENPT AND CENPU</scope>
    <scope>SUBCELLULAR LOCATION</scope>
    <scope>FUNCTION</scope>
</reference>
<reference key="10">
    <citation type="journal article" date="2007" name="EMBO J.">
        <title>The CENP-A NAC/CAD kinetochore complex controls chromosome congression and spindle bipolarity.</title>
        <authorList>
            <person name="McClelland S.E."/>
            <person name="Borusu S."/>
            <person name="Amaro A.C."/>
            <person name="Winter J.R."/>
            <person name="Belwal M."/>
            <person name="McAinsh A.D."/>
            <person name="Meraldi P."/>
        </authorList>
    </citation>
    <scope>FUNCTION</scope>
    <scope>SUBCELLULAR LOCATION</scope>
</reference>
<reference key="11">
    <citation type="journal article" date="2008" name="Mol. Cell">
        <title>Kinase-selective enrichment enables quantitative phosphoproteomics of the kinome across the cell cycle.</title>
        <authorList>
            <person name="Daub H."/>
            <person name="Olsen J.V."/>
            <person name="Bairlein M."/>
            <person name="Gnad F."/>
            <person name="Oppermann F.S."/>
            <person name="Korner R."/>
            <person name="Greff Z."/>
            <person name="Keri G."/>
            <person name="Stemmann O."/>
            <person name="Mann M."/>
        </authorList>
    </citation>
    <scope>PHOSPHORYLATION [LARGE SCALE ANALYSIS] AT SER-226 AND SER-282</scope>
    <scope>IDENTIFICATION BY MASS SPECTROMETRY [LARGE SCALE ANALYSIS]</scope>
    <source>
        <tissue>Cervix carcinoma</tissue>
    </source>
</reference>
<reference key="12">
    <citation type="journal article" date="2008" name="Proc. Natl. Acad. Sci. U.S.A.">
        <title>A quantitative atlas of mitotic phosphorylation.</title>
        <authorList>
            <person name="Dephoure N."/>
            <person name="Zhou C."/>
            <person name="Villen J."/>
            <person name="Beausoleil S.A."/>
            <person name="Bakalarski C.E."/>
            <person name="Elledge S.J."/>
            <person name="Gygi S.P."/>
        </authorList>
    </citation>
    <scope>PHOSPHORYLATION [LARGE SCALE ANALYSIS] AT SER-226 AND SER-282</scope>
    <scope>IDENTIFICATION BY MASS SPECTROMETRY [LARGE SCALE ANALYSIS]</scope>
    <source>
        <tissue>Cervix carcinoma</tissue>
    </source>
</reference>
<reference key="13">
    <citation type="journal article" date="2009" name="Nat. Cell Biol.">
        <title>Centromere assembly requires the direct recognition of CENP-A nucleosomes by CENP-N.</title>
        <authorList>
            <person name="Carroll C.W."/>
            <person name="Silva M.C.C."/>
            <person name="Godek K.M."/>
            <person name="Jansen L.E.T."/>
            <person name="Straight A.F."/>
        </authorList>
    </citation>
    <scope>FUNCTION</scope>
    <scope>INTERACTION WITH CENPA</scope>
    <scope>MUTAGENESIS OF ARG-11 AND ARG-196</scope>
</reference>
<reference key="14">
    <citation type="journal article" date="2010" name="Sci. Signal.">
        <title>Quantitative phosphoproteomics reveals widespread full phosphorylation site occupancy during mitosis.</title>
        <authorList>
            <person name="Olsen J.V."/>
            <person name="Vermeulen M."/>
            <person name="Santamaria A."/>
            <person name="Kumar C."/>
            <person name="Miller M.L."/>
            <person name="Jensen L.J."/>
            <person name="Gnad F."/>
            <person name="Cox J."/>
            <person name="Jensen T.S."/>
            <person name="Nigg E.A."/>
            <person name="Brunak S."/>
            <person name="Mann M."/>
        </authorList>
    </citation>
    <scope>PHOSPHORYLATION [LARGE SCALE ANALYSIS] AT SER-226 AND SER-282</scope>
    <scope>IDENTIFICATION BY MASS SPECTROMETRY [LARGE SCALE ANALYSIS]</scope>
    <source>
        <tissue>Cervix carcinoma</tissue>
    </source>
</reference>
<reference key="15">
    <citation type="journal article" date="2011" name="Sci. Signal.">
        <title>System-wide temporal characterization of the proteome and phosphoproteome of human embryonic stem cell differentiation.</title>
        <authorList>
            <person name="Rigbolt K.T."/>
            <person name="Prokhorova T.A."/>
            <person name="Akimov V."/>
            <person name="Henningsen J."/>
            <person name="Johansen P.T."/>
            <person name="Kratchmarova I."/>
            <person name="Kassem M."/>
            <person name="Mann M."/>
            <person name="Olsen J.V."/>
            <person name="Blagoev B."/>
        </authorList>
    </citation>
    <scope>PHOSPHORYLATION [LARGE SCALE ANALYSIS] AT SER-226 AND SER-282</scope>
    <scope>IDENTIFICATION BY MASS SPECTROMETRY [LARGE SCALE ANALYSIS]</scope>
</reference>
<reference key="16">
    <citation type="journal article" date="2013" name="J. Proteome Res.">
        <title>Toward a comprehensive characterization of a human cancer cell phosphoproteome.</title>
        <authorList>
            <person name="Zhou H."/>
            <person name="Di Palma S."/>
            <person name="Preisinger C."/>
            <person name="Peng M."/>
            <person name="Polat A.N."/>
            <person name="Heck A.J."/>
            <person name="Mohammed S."/>
        </authorList>
    </citation>
    <scope>PHOSPHORYLATION [LARGE SCALE ANALYSIS] AT SER-226; SER-235 AND SER-282</scope>
    <scope>IDENTIFICATION BY MASS SPECTROMETRY [LARGE SCALE ANALYSIS]</scope>
    <source>
        <tissue>Cervix carcinoma</tissue>
        <tissue>Erythroleukemia</tissue>
    </source>
</reference>
<reference key="17">
    <citation type="journal article" date="2016" name="Mol. Cell">
        <title>The flexible ends of CENP-A nucleosome are required for mitotic fidelity.</title>
        <authorList>
            <person name="Roulland Y."/>
            <person name="Ouararhni K."/>
            <person name="Naidenov M."/>
            <person name="Ramos L."/>
            <person name="Shuaib M."/>
            <person name="Syed S.H."/>
            <person name="Lone I.N."/>
            <person name="Boopathi R."/>
            <person name="Fontaine E."/>
            <person name="Papai G."/>
            <person name="Tachiwana H."/>
            <person name="Gautier T."/>
            <person name="Skoufias D."/>
            <person name="Padmanabhan K."/>
            <person name="Bednar J."/>
            <person name="Kurumizaka H."/>
            <person name="Schultz P."/>
            <person name="Angelov D."/>
            <person name="Hamiche A."/>
            <person name="Dimitrov S."/>
        </authorList>
    </citation>
    <scope>SUBUNIT</scope>
</reference>
<dbReference type="EMBL" id="AF217515">
    <property type="protein sequence ID" value="AAF67626.1"/>
    <property type="molecule type" value="mRNA"/>
</dbReference>
<dbReference type="EMBL" id="AK023669">
    <property type="protein sequence ID" value="BAG51215.1"/>
    <property type="molecule type" value="mRNA"/>
</dbReference>
<dbReference type="EMBL" id="AK026313">
    <property type="status" value="NOT_ANNOTATED_CDS"/>
    <property type="molecule type" value="mRNA"/>
</dbReference>
<dbReference type="EMBL" id="AK298554">
    <property type="protein sequence ID" value="BAG60749.1"/>
    <property type="molecule type" value="mRNA"/>
</dbReference>
<dbReference type="EMBL" id="AK296024">
    <property type="protein sequence ID" value="BAG58793.1"/>
    <property type="molecule type" value="mRNA"/>
</dbReference>
<dbReference type="EMBL" id="AC092718">
    <property type="status" value="NOT_ANNOTATED_CDS"/>
    <property type="molecule type" value="Genomic_DNA"/>
</dbReference>
<dbReference type="EMBL" id="CH471114">
    <property type="protein sequence ID" value="EAW95553.1"/>
    <property type="molecule type" value="Genomic_DNA"/>
</dbReference>
<dbReference type="EMBL" id="CH471114">
    <property type="protein sequence ID" value="EAW95556.1"/>
    <property type="molecule type" value="Genomic_DNA"/>
</dbReference>
<dbReference type="EMBL" id="BC007334">
    <property type="protein sequence ID" value="AAH07334.1"/>
    <property type="molecule type" value="mRNA"/>
</dbReference>
<dbReference type="EMBL" id="BC008972">
    <property type="protein sequence ID" value="AAH08972.1"/>
    <property type="molecule type" value="mRNA"/>
</dbReference>
<dbReference type="CCDS" id="CCDS10931.1">
    <molecule id="Q96H22-2"/>
</dbReference>
<dbReference type="CCDS" id="CCDS42199.1">
    <molecule id="Q96H22-3"/>
</dbReference>
<dbReference type="CCDS" id="CCDS42200.1">
    <molecule id="Q96H22-1"/>
</dbReference>
<dbReference type="CCDS" id="CCDS58482.1">
    <molecule id="Q96H22-5"/>
</dbReference>
<dbReference type="CCDS" id="CCDS58483.1">
    <molecule id="Q96H22-4"/>
</dbReference>
<dbReference type="RefSeq" id="NP_001094094.2">
    <molecule id="Q96H22-1"/>
    <property type="nucleotide sequence ID" value="NM_001100624.3"/>
</dbReference>
<dbReference type="RefSeq" id="NP_001094095.2">
    <molecule id="Q96H22-3"/>
    <property type="nucleotide sequence ID" value="NM_001100625.3"/>
</dbReference>
<dbReference type="RefSeq" id="NP_001257402.1">
    <molecule id="Q96H22-4"/>
    <property type="nucleotide sequence ID" value="NM_001270473.2"/>
</dbReference>
<dbReference type="RefSeq" id="NP_001257403.1">
    <molecule id="Q96H22-5"/>
    <property type="nucleotide sequence ID" value="NM_001270474.2"/>
</dbReference>
<dbReference type="RefSeq" id="NP_060925.2">
    <molecule id="Q96H22-2"/>
    <property type="nucleotide sequence ID" value="NM_018455.6"/>
</dbReference>
<dbReference type="RefSeq" id="XP_006721299.1">
    <molecule id="Q96H22-1"/>
    <property type="nucleotide sequence ID" value="XM_006721236.5"/>
</dbReference>
<dbReference type="RefSeq" id="XP_016878945.1">
    <molecule id="Q96H22-2"/>
    <property type="nucleotide sequence ID" value="XM_017023456.3"/>
</dbReference>
<dbReference type="RefSeq" id="XP_047290322.1">
    <molecule id="Q96H22-5"/>
    <property type="nucleotide sequence ID" value="XM_047434366.1"/>
</dbReference>
<dbReference type="RefSeq" id="XP_054189169.1">
    <molecule id="Q96H22-1"/>
    <property type="nucleotide sequence ID" value="XM_054333194.1"/>
</dbReference>
<dbReference type="RefSeq" id="XP_054189170.1">
    <molecule id="Q96H22-5"/>
    <property type="nucleotide sequence ID" value="XM_054333195.1"/>
</dbReference>
<dbReference type="RefSeq" id="XP_054189171.1">
    <molecule id="Q96H22-2"/>
    <property type="nucleotide sequence ID" value="XM_054333196.1"/>
</dbReference>
<dbReference type="PDB" id="6BUZ">
    <property type="method" value="EM"/>
    <property type="resolution" value="3.92 A"/>
    <property type="chains" value="N=1-286"/>
</dbReference>
<dbReference type="PDB" id="6C0W">
    <property type="method" value="EM"/>
    <property type="resolution" value="4.00 A"/>
    <property type="chains" value="K=1-289"/>
</dbReference>
<dbReference type="PDB" id="6EQT">
    <property type="method" value="X-ray"/>
    <property type="resolution" value="2.73 A"/>
    <property type="chains" value="A/B=1-213"/>
</dbReference>
<dbReference type="PDB" id="6MUO">
    <property type="method" value="EM"/>
    <property type="resolution" value="3.60 A"/>
    <property type="chains" value="M=1-212"/>
</dbReference>
<dbReference type="PDB" id="6MUP">
    <property type="method" value="EM"/>
    <property type="resolution" value="3.50 A"/>
    <property type="chains" value="M/N=1-212"/>
</dbReference>
<dbReference type="PDB" id="7PKN">
    <property type="method" value="EM"/>
    <property type="resolution" value="3.20 A"/>
    <property type="chains" value="N=1-339"/>
</dbReference>
<dbReference type="PDB" id="7QOO">
    <property type="method" value="EM"/>
    <property type="resolution" value="4.60 A"/>
    <property type="chains" value="N=1-339"/>
</dbReference>
<dbReference type="PDB" id="7R5S">
    <property type="method" value="EM"/>
    <property type="resolution" value="2.83 A"/>
    <property type="chains" value="N=1-339"/>
</dbReference>
<dbReference type="PDB" id="7R5V">
    <property type="method" value="EM"/>
    <property type="resolution" value="4.55 A"/>
    <property type="chains" value="N=1-339"/>
</dbReference>
<dbReference type="PDB" id="7U46">
    <property type="method" value="EM"/>
    <property type="resolution" value="2.68 A"/>
    <property type="chains" value="K=1-289"/>
</dbReference>
<dbReference type="PDB" id="7U47">
    <property type="method" value="EM"/>
    <property type="resolution" value="7.50 A"/>
    <property type="chains" value="K/V=1-289"/>
</dbReference>
<dbReference type="PDB" id="7U4D">
    <property type="method" value="EM"/>
    <property type="resolution" value="8.10 A"/>
    <property type="chains" value="K/V=1-289"/>
</dbReference>
<dbReference type="PDB" id="7XHN">
    <property type="method" value="EM"/>
    <property type="resolution" value="3.71 A"/>
    <property type="chains" value="N=1-339"/>
</dbReference>
<dbReference type="PDB" id="7XHO">
    <property type="method" value="EM"/>
    <property type="resolution" value="3.29 A"/>
    <property type="chains" value="N=1-339"/>
</dbReference>
<dbReference type="PDB" id="7YWX">
    <property type="method" value="EM"/>
    <property type="resolution" value="12.00 A"/>
    <property type="chains" value="N=1-339"/>
</dbReference>
<dbReference type="PDB" id="7YYH">
    <property type="method" value="EM"/>
    <property type="resolution" value="8.90 A"/>
    <property type="chains" value="N=1-339"/>
</dbReference>
<dbReference type="PDBsum" id="6BUZ"/>
<dbReference type="PDBsum" id="6C0W"/>
<dbReference type="PDBsum" id="6EQT"/>
<dbReference type="PDBsum" id="6MUO"/>
<dbReference type="PDBsum" id="6MUP"/>
<dbReference type="PDBsum" id="7PKN"/>
<dbReference type="PDBsum" id="7QOO"/>
<dbReference type="PDBsum" id="7R5S"/>
<dbReference type="PDBsum" id="7R5V"/>
<dbReference type="PDBsum" id="7U46"/>
<dbReference type="PDBsum" id="7U47"/>
<dbReference type="PDBsum" id="7U4D"/>
<dbReference type="PDBsum" id="7XHN"/>
<dbReference type="PDBsum" id="7XHO"/>
<dbReference type="PDBsum" id="7YWX"/>
<dbReference type="PDBsum" id="7YYH"/>
<dbReference type="EMDB" id="EMD-13473"/>
<dbReference type="EMDB" id="EMD-14098"/>
<dbReference type="EMDB" id="EMD-14336"/>
<dbReference type="EMDB" id="EMD-14341"/>
<dbReference type="EMDB" id="EMD-14351"/>
<dbReference type="EMDB" id="EMD-14375"/>
<dbReference type="EMDB" id="EMD-26330"/>
<dbReference type="EMDB" id="EMD-26331"/>
<dbReference type="EMDB" id="EMD-26332"/>
<dbReference type="EMDB" id="EMD-33196"/>
<dbReference type="EMDB" id="EMD-33197"/>
<dbReference type="EMDB" id="EMD-7293"/>
<dbReference type="EMDB" id="EMD-7318"/>
<dbReference type="EMDB" id="EMD-7326"/>
<dbReference type="EMDB" id="EMD-9250"/>
<dbReference type="EMDB" id="EMD-9251"/>
<dbReference type="SMR" id="Q96H22"/>
<dbReference type="BioGRID" id="120942">
    <property type="interactions" value="64"/>
</dbReference>
<dbReference type="ComplexPortal" id="CPX-5646">
    <property type="entry name" value="Kinetochore CCAN complex"/>
</dbReference>
<dbReference type="CORUM" id="Q96H22"/>
<dbReference type="FunCoup" id="Q96H22">
    <property type="interactions" value="2004"/>
</dbReference>
<dbReference type="IntAct" id="Q96H22">
    <property type="interactions" value="48"/>
</dbReference>
<dbReference type="MINT" id="Q96H22"/>
<dbReference type="STRING" id="9606.ENSP00000377007"/>
<dbReference type="iPTMnet" id="Q96H22"/>
<dbReference type="PhosphoSitePlus" id="Q96H22"/>
<dbReference type="BioMuta" id="CENPN"/>
<dbReference type="DMDM" id="308153423"/>
<dbReference type="jPOST" id="Q96H22"/>
<dbReference type="MassIVE" id="Q96H22"/>
<dbReference type="PaxDb" id="9606-ENSP00000377007"/>
<dbReference type="PeptideAtlas" id="Q96H22"/>
<dbReference type="ProteomicsDB" id="17903"/>
<dbReference type="ProteomicsDB" id="18278"/>
<dbReference type="ProteomicsDB" id="2470"/>
<dbReference type="ProteomicsDB" id="76697">
    <molecule id="Q96H22-1"/>
</dbReference>
<dbReference type="ProteomicsDB" id="76698">
    <molecule id="Q96H22-2"/>
</dbReference>
<dbReference type="Pumba" id="Q96H22"/>
<dbReference type="Antibodypedia" id="30430">
    <property type="antibodies" value="114 antibodies from 26 providers"/>
</dbReference>
<dbReference type="DNASU" id="55839"/>
<dbReference type="Ensembl" id="ENST00000299572.9">
    <molecule id="Q96H22-2"/>
    <property type="protein sequence ID" value="ENSP00000299572.5"/>
    <property type="gene ID" value="ENSG00000166451.14"/>
</dbReference>
<dbReference type="Ensembl" id="ENST00000305850.10">
    <molecule id="Q96H22-1"/>
    <property type="protein sequence ID" value="ENSP00000305608.5"/>
    <property type="gene ID" value="ENSG00000166451.14"/>
</dbReference>
<dbReference type="Ensembl" id="ENST00000393335.7">
    <molecule id="Q96H22-3"/>
    <property type="protein sequence ID" value="ENSP00000377007.3"/>
    <property type="gene ID" value="ENSG00000166451.14"/>
</dbReference>
<dbReference type="Ensembl" id="ENST00000428963.6">
    <molecule id="Q96H22-5"/>
    <property type="protein sequence ID" value="ENSP00000393991.2"/>
    <property type="gene ID" value="ENSG00000166451.14"/>
</dbReference>
<dbReference type="Ensembl" id="ENST00000439957.7">
    <molecule id="Q96H22-4"/>
    <property type="protein sequence ID" value="ENSP00000395235.3"/>
    <property type="gene ID" value="ENSG00000166451.14"/>
</dbReference>
<dbReference type="Ensembl" id="ENST00000709369.1">
    <molecule id="Q96H22-1"/>
    <property type="protein sequence ID" value="ENSP00000517649.1"/>
    <property type="gene ID" value="ENSG00000291964.1"/>
</dbReference>
<dbReference type="Ensembl" id="ENST00000709370.1">
    <molecule id="Q96H22-2"/>
    <property type="protein sequence ID" value="ENSP00000517650.1"/>
    <property type="gene ID" value="ENSG00000291964.1"/>
</dbReference>
<dbReference type="Ensembl" id="ENST00000709371.1">
    <molecule id="Q96H22-4"/>
    <property type="protein sequence ID" value="ENSP00000517651.1"/>
    <property type="gene ID" value="ENSG00000291964.1"/>
</dbReference>
<dbReference type="Ensembl" id="ENST00000709372.1">
    <molecule id="Q96H22-3"/>
    <property type="protein sequence ID" value="ENSP00000517652.1"/>
    <property type="gene ID" value="ENSG00000291964.1"/>
</dbReference>
<dbReference type="Ensembl" id="ENST00000709374.1">
    <molecule id="Q96H22-5"/>
    <property type="protein sequence ID" value="ENSP00000517653.1"/>
    <property type="gene ID" value="ENSG00000291964.1"/>
</dbReference>
<dbReference type="GeneID" id="55839"/>
<dbReference type="KEGG" id="hsa:55839"/>
<dbReference type="MANE-Select" id="ENST00000305850.10">
    <property type="protein sequence ID" value="ENSP00000305608.5"/>
    <property type="RefSeq nucleotide sequence ID" value="NM_001100624.3"/>
    <property type="RefSeq protein sequence ID" value="NP_001094094.2"/>
</dbReference>
<dbReference type="UCSC" id="uc002ffw.5">
    <molecule id="Q96H22-1"/>
    <property type="organism name" value="human"/>
</dbReference>
<dbReference type="AGR" id="HGNC:30873"/>
<dbReference type="CTD" id="55839"/>
<dbReference type="DisGeNET" id="55839"/>
<dbReference type="GeneCards" id="CENPN"/>
<dbReference type="HGNC" id="HGNC:30873">
    <property type="gene designation" value="CENPN"/>
</dbReference>
<dbReference type="HPA" id="ENSG00000166451">
    <property type="expression patterns" value="Tissue enhanced (bone)"/>
</dbReference>
<dbReference type="MIM" id="611509">
    <property type="type" value="gene"/>
</dbReference>
<dbReference type="neXtProt" id="NX_Q96H22"/>
<dbReference type="OpenTargets" id="ENSG00000166451"/>
<dbReference type="PharmGKB" id="PA143485397"/>
<dbReference type="VEuPathDB" id="HostDB:ENSG00000166451"/>
<dbReference type="eggNOG" id="ENOG502QSE8">
    <property type="taxonomic scope" value="Eukaryota"/>
</dbReference>
<dbReference type="GeneTree" id="ENSGT00390000004738"/>
<dbReference type="HOGENOM" id="CLU_1521215_0_0_1"/>
<dbReference type="InParanoid" id="Q96H22"/>
<dbReference type="OMA" id="WSVYQMK"/>
<dbReference type="OrthoDB" id="6585699at2759"/>
<dbReference type="PAN-GO" id="Q96H22">
    <property type="GO annotations" value="1 GO annotation based on evolutionary models"/>
</dbReference>
<dbReference type="PhylomeDB" id="Q96H22"/>
<dbReference type="TreeFam" id="TF329714"/>
<dbReference type="PathwayCommons" id="Q96H22"/>
<dbReference type="Reactome" id="R-HSA-141444">
    <property type="pathway name" value="Amplification of signal from unattached kinetochores via a MAD2 inhibitory signal"/>
</dbReference>
<dbReference type="Reactome" id="R-HSA-2467813">
    <property type="pathway name" value="Separation of Sister Chromatids"/>
</dbReference>
<dbReference type="Reactome" id="R-HSA-2500257">
    <property type="pathway name" value="Resolution of Sister Chromatid Cohesion"/>
</dbReference>
<dbReference type="Reactome" id="R-HSA-5663220">
    <property type="pathway name" value="RHO GTPases Activate Formins"/>
</dbReference>
<dbReference type="Reactome" id="R-HSA-606279">
    <property type="pathway name" value="Deposition of new CENPA-containing nucleosomes at the centromere"/>
</dbReference>
<dbReference type="Reactome" id="R-HSA-68877">
    <property type="pathway name" value="Mitotic Prometaphase"/>
</dbReference>
<dbReference type="Reactome" id="R-HSA-9648025">
    <property type="pathway name" value="EML4 and NUDC in mitotic spindle formation"/>
</dbReference>
<dbReference type="SignaLink" id="Q96H22"/>
<dbReference type="SIGNOR" id="Q96H22"/>
<dbReference type="BioGRID-ORCS" id="55839">
    <property type="hits" value="796 hits in 1161 CRISPR screens"/>
</dbReference>
<dbReference type="ChiTaRS" id="CENPN">
    <property type="organism name" value="human"/>
</dbReference>
<dbReference type="GeneWiki" id="CENPN"/>
<dbReference type="GenomeRNAi" id="55839"/>
<dbReference type="Pharos" id="Q96H22">
    <property type="development level" value="Tbio"/>
</dbReference>
<dbReference type="PRO" id="PR:Q96H22"/>
<dbReference type="Proteomes" id="UP000005640">
    <property type="component" value="Chromosome 16"/>
</dbReference>
<dbReference type="RNAct" id="Q96H22">
    <property type="molecule type" value="protein"/>
</dbReference>
<dbReference type="Bgee" id="ENSG00000166451">
    <property type="expression patterns" value="Expressed in ventricular zone and 135 other cell types or tissues"/>
</dbReference>
<dbReference type="ExpressionAtlas" id="Q96H22">
    <property type="expression patterns" value="baseline and differential"/>
</dbReference>
<dbReference type="GO" id="GO:0005829">
    <property type="term" value="C:cytosol"/>
    <property type="evidence" value="ECO:0000304"/>
    <property type="project" value="Reactome"/>
</dbReference>
<dbReference type="GO" id="GO:0000939">
    <property type="term" value="C:inner kinetochore"/>
    <property type="evidence" value="ECO:0000353"/>
    <property type="project" value="ComplexPortal"/>
</dbReference>
<dbReference type="GO" id="GO:0005654">
    <property type="term" value="C:nucleoplasm"/>
    <property type="evidence" value="ECO:0000314"/>
    <property type="project" value="HPA"/>
</dbReference>
<dbReference type="GO" id="GO:0005634">
    <property type="term" value="C:nucleus"/>
    <property type="evidence" value="ECO:0000303"/>
    <property type="project" value="ComplexPortal"/>
</dbReference>
<dbReference type="GO" id="GO:0034080">
    <property type="term" value="P:CENP-A containing chromatin assembly"/>
    <property type="evidence" value="ECO:0007669"/>
    <property type="project" value="InterPro"/>
</dbReference>
<dbReference type="GO" id="GO:0007059">
    <property type="term" value="P:chromosome segregation"/>
    <property type="evidence" value="ECO:0000303"/>
    <property type="project" value="ComplexPortal"/>
</dbReference>
<dbReference type="InterPro" id="IPR052011">
    <property type="entry name" value="CENP-NAC/CAD_complex"/>
</dbReference>
<dbReference type="InterPro" id="IPR007902">
    <property type="entry name" value="Chl4/mis15/CENP-N"/>
</dbReference>
<dbReference type="PANTHER" id="PTHR46790">
    <property type="entry name" value="CENTROMERE PROTEIN N"/>
    <property type="match status" value="1"/>
</dbReference>
<dbReference type="PANTHER" id="PTHR46790:SF1">
    <property type="entry name" value="CENTROMERE PROTEIN N"/>
    <property type="match status" value="1"/>
</dbReference>
<dbReference type="Pfam" id="PF05238">
    <property type="entry name" value="CENP-N"/>
    <property type="match status" value="1"/>
</dbReference>
<gene>
    <name type="primary">CENPN</name>
    <name type="synonym">C16orf60</name>
    <name type="synonym">ICEN32</name>
    <name type="ORF">BM-309</name>
</gene>
<proteinExistence type="evidence at protein level"/>
<sequence>MDETVAEFIKRTILKIPMNELTTILKAWDFLSENQLQTVNFRQRKESVVQHLIHLCEEKRASISDAALLDIIYMQFHQHQKVWEVFQMSKGPGEDVDLFDMKQFKNSFKKILQRALKNVTVSFRETEENAVWIRIAWGTQYTKPNQYKPTYVVYYSQTPYAFTSSSMLRRNTPLLGQALTIASKHHQIVKMDLRSRYLDSLKAIVFKQYNQTFETHNSTTPLQERSLGLDINMDSRIIHENIVEKERVQRITQETFGDYPQPQLEFAQYKLETKFKSGLNGSILAEREEPLRCLIKFSSPHLLEALKSLAPAGIADAPLSPLLTCIPNKRMNYFKIRDK</sequence>
<comment type="function">
    <text evidence="3 5 6 7">Component of the CENPA-NAC (nucleosome-associated) complex, a complex that plays a central role in assembly of kinetochore proteins, mitotic progression and chromosome segregation. The CENPA-NAC complex recruits the CENPA-CAD (nucleosome distal) complex and may be involved in incorporation of newly synthesized CENPA into centromeres. CENPN is the first protein to bind specifically to CENPA nucleosomes and the direct binding of CENPA nucleosomes by CENPN is required for centromere assembly. Required for chromosome congression and efficiently align the chromosomes on a metaphase plate.</text>
</comment>
<comment type="subunit">
    <text evidence="3 4 7 8">Component of the CENPA-NAC complex, at least composed of CENPA, CENPC, CENPH, CENPM, CENPN, CENPT and CENPU (PubMed:16622419, PubMed:16622420). The CENPA-NAC complex interacts with the CENPA-CAD complex, composed of CENPI, CENPK, CENPL, CENPO, CENPP, CENPQ, CENPR and CENPS. Interacts directly with CENPA (PubMed:19543270). Identified in a centromere complex containing histones H2A, H2B and H4, and at least CENPA, CENPB, CENPC, CENPT, CENPN, HJURP, SUPT16H, SSRP1 and RSF1 (PubMed:27499292).</text>
</comment>
<comment type="interaction">
    <interactant intactId="EBI-19948078">
        <id>Q96H22-3</id>
    </interactant>
    <interactant intactId="EBI-2878075">
        <id>Q9BT30</id>
        <label>ALKBH7</label>
    </interactant>
    <organismsDiffer>false</organismsDiffer>
    <experiments>3</experiments>
</comment>
<comment type="interaction">
    <interactant intactId="EBI-19948078">
        <id>Q96H22-3</id>
    </interactant>
    <interactant intactId="EBI-10261970">
        <id>Q8IW40</id>
        <label>CCDC103</label>
    </interactant>
    <organismsDiffer>false</organismsDiffer>
    <experiments>3</experiments>
</comment>
<comment type="interaction">
    <interactant intactId="EBI-19948078">
        <id>Q96H22-3</id>
    </interactant>
    <interactant intactId="EBI-9057006">
        <id>Q9UJX0</id>
        <label>OSGIN1</label>
    </interactant>
    <organismsDiffer>false</organismsDiffer>
    <experiments>3</experiments>
</comment>
<comment type="interaction">
    <interactant intactId="EBI-19948078">
        <id>Q96H22-3</id>
    </interactant>
    <interactant intactId="EBI-3918381">
        <id>Q96PN8</id>
        <label>TSSK3</label>
    </interactant>
    <organismsDiffer>false</organismsDiffer>
    <experiments>3</experiments>
</comment>
<comment type="subcellular location">
    <subcellularLocation>
        <location>Nucleus</location>
    </subcellularLocation>
    <subcellularLocation>
        <location>Chromosome</location>
        <location>Centromere</location>
        <location>Kinetochore</location>
    </subcellularLocation>
    <text>Localizes exclusively in the kinetochore domain of centromeres. Kinetochore-bound levels decrease when cells enter mitosis and increase again when cells exit mitosis.</text>
</comment>
<comment type="alternative products">
    <event type="alternative splicing"/>
    <isoform>
        <id>Q96H22-1</id>
        <name>1</name>
        <sequence type="displayed"/>
    </isoform>
    <isoform>
        <id>Q96H22-2</id>
        <name>2</name>
        <sequence type="described" ref="VSP_020441 VSP_020442"/>
    </isoform>
    <isoform>
        <id>Q96H22-3</id>
        <name>3</name>
        <sequence type="described" ref="VSP_044565"/>
    </isoform>
    <isoform>
        <id>Q96H22-4</id>
        <name>4</name>
        <sequence type="described" ref="VSP_044689"/>
    </isoform>
    <isoform>
        <id>Q96H22-5</id>
        <name>5</name>
        <sequence type="described" ref="VSP_044690"/>
    </isoform>
</comment>
<comment type="similarity">
    <text evidence="14">Belongs to the CENP-N/CHL4 family.</text>
</comment>
<protein>
    <recommendedName>
        <fullName>Centromere protein N</fullName>
        <shortName>CENP-N</shortName>
    </recommendedName>
    <alternativeName>
        <fullName>Interphase centromere complex protein 32</fullName>
    </alternativeName>
</protein>
<name>CENPN_HUMAN</name>
<accession>Q96H22</accession>
<accession>A8MZE6</accession>
<accession>B3KN53</accession>
<accession>B4DJD1</accession>
<accession>B4DPY7</accession>
<accession>C9JJM5</accession>
<accession>D3DUK8</accession>
<accession>E7ES30</accession>
<accession>E7ETS3</accession>
<accession>Q9NZ83</accession>
<evidence type="ECO:0000269" key="1">
    <source>
    </source>
</evidence>
<evidence type="ECO:0000269" key="2">
    <source>
    </source>
</evidence>
<evidence type="ECO:0000269" key="3">
    <source>
    </source>
</evidence>
<evidence type="ECO:0000269" key="4">
    <source>
    </source>
</evidence>
<evidence type="ECO:0000269" key="5">
    <source>
    </source>
</evidence>
<evidence type="ECO:0000269" key="6">
    <source>
    </source>
</evidence>
<evidence type="ECO:0000269" key="7">
    <source>
    </source>
</evidence>
<evidence type="ECO:0000269" key="8">
    <source>
    </source>
</evidence>
<evidence type="ECO:0000269" key="9">
    <source ref="1"/>
</evidence>
<evidence type="ECO:0000269" key="10">
    <source ref="4"/>
</evidence>
<evidence type="ECO:0000303" key="11">
    <source>
    </source>
</evidence>
<evidence type="ECO:0000303" key="12">
    <source>
    </source>
</evidence>
<evidence type="ECO:0000303" key="13">
    <source ref="1"/>
</evidence>
<evidence type="ECO:0000305" key="14"/>
<evidence type="ECO:0007744" key="15">
    <source>
    </source>
</evidence>
<evidence type="ECO:0007744" key="16">
    <source>
    </source>
</evidence>
<evidence type="ECO:0007744" key="17">
    <source>
    </source>
</evidence>
<evidence type="ECO:0007744" key="18">
    <source>
    </source>
</evidence>
<evidence type="ECO:0007744" key="19">
    <source>
    </source>
</evidence>
<evidence type="ECO:0007744" key="20">
    <source>
    </source>
</evidence>
<evidence type="ECO:0007829" key="21">
    <source>
        <dbReference type="PDB" id="6MUP"/>
    </source>
</evidence>
<evidence type="ECO:0007829" key="22">
    <source>
        <dbReference type="PDB" id="7PKN"/>
    </source>
</evidence>
<evidence type="ECO:0007829" key="23">
    <source>
        <dbReference type="PDB" id="7R5S"/>
    </source>
</evidence>
<evidence type="ECO:0007829" key="24">
    <source>
        <dbReference type="PDB" id="7U46"/>
    </source>
</evidence>